<keyword id="KW-0031">Aminopeptidase</keyword>
<keyword id="KW-0963">Cytoplasm</keyword>
<keyword id="KW-0378">Hydrolase</keyword>
<keyword id="KW-0464">Manganese</keyword>
<keyword id="KW-0479">Metal-binding</keyword>
<keyword id="KW-0645">Protease</keyword>
<organism>
    <name type="scientific">Salmonella typhi</name>
    <dbReference type="NCBI Taxonomy" id="90370"/>
    <lineage>
        <taxon>Bacteria</taxon>
        <taxon>Pseudomonadati</taxon>
        <taxon>Pseudomonadota</taxon>
        <taxon>Gammaproteobacteria</taxon>
        <taxon>Enterobacterales</taxon>
        <taxon>Enterobacteriaceae</taxon>
        <taxon>Salmonella</taxon>
    </lineage>
</organism>
<evidence type="ECO:0000255" key="1">
    <source>
        <dbReference type="HAMAP-Rule" id="MF_00181"/>
    </source>
</evidence>
<protein>
    <recommendedName>
        <fullName evidence="1">Probable cytosol aminopeptidase</fullName>
        <ecNumber evidence="1">3.4.11.1</ecNumber>
    </recommendedName>
    <alternativeName>
        <fullName evidence="1">Leucine aminopeptidase</fullName>
        <shortName evidence="1">LAP</shortName>
        <ecNumber evidence="1">3.4.11.10</ecNumber>
    </alternativeName>
    <alternativeName>
        <fullName evidence="1">Leucyl aminopeptidase</fullName>
    </alternativeName>
</protein>
<comment type="function">
    <text evidence="1">Presumably involved in the processing and regular turnover of intracellular proteins. Catalyzes the removal of unsubstituted N-terminal amino acids from various peptides.</text>
</comment>
<comment type="catalytic activity">
    <reaction evidence="1">
        <text>Release of an N-terminal amino acid, Xaa-|-Yaa-, in which Xaa is preferably Leu, but may be other amino acids including Pro although not Arg or Lys, and Yaa may be Pro. Amino acid amides and methyl esters are also readily hydrolyzed, but rates on arylamides are exceedingly low.</text>
        <dbReference type="EC" id="3.4.11.1"/>
    </reaction>
</comment>
<comment type="catalytic activity">
    <reaction evidence="1">
        <text>Release of an N-terminal amino acid, preferentially leucine, but not glutamic or aspartic acids.</text>
        <dbReference type="EC" id="3.4.11.10"/>
    </reaction>
</comment>
<comment type="cofactor">
    <cofactor evidence="1">
        <name>Mn(2+)</name>
        <dbReference type="ChEBI" id="CHEBI:29035"/>
    </cofactor>
    <text evidence="1">Binds 2 manganese ions per subunit.</text>
</comment>
<comment type="subcellular location">
    <subcellularLocation>
        <location evidence="1">Cytoplasm</location>
    </subcellularLocation>
</comment>
<comment type="similarity">
    <text evidence="1">Belongs to the peptidase M17 family.</text>
</comment>
<reference key="1">
    <citation type="journal article" date="2001" name="Nature">
        <title>Complete genome sequence of a multiple drug resistant Salmonella enterica serovar Typhi CT18.</title>
        <authorList>
            <person name="Parkhill J."/>
            <person name="Dougan G."/>
            <person name="James K.D."/>
            <person name="Thomson N.R."/>
            <person name="Pickard D."/>
            <person name="Wain J."/>
            <person name="Churcher C.M."/>
            <person name="Mungall K.L."/>
            <person name="Bentley S.D."/>
            <person name="Holden M.T.G."/>
            <person name="Sebaihia M."/>
            <person name="Baker S."/>
            <person name="Basham D."/>
            <person name="Brooks K."/>
            <person name="Chillingworth T."/>
            <person name="Connerton P."/>
            <person name="Cronin A."/>
            <person name="Davis P."/>
            <person name="Davies R.M."/>
            <person name="Dowd L."/>
            <person name="White N."/>
            <person name="Farrar J."/>
            <person name="Feltwell T."/>
            <person name="Hamlin N."/>
            <person name="Haque A."/>
            <person name="Hien T.T."/>
            <person name="Holroyd S."/>
            <person name="Jagels K."/>
            <person name="Krogh A."/>
            <person name="Larsen T.S."/>
            <person name="Leather S."/>
            <person name="Moule S."/>
            <person name="O'Gaora P."/>
            <person name="Parry C."/>
            <person name="Quail M.A."/>
            <person name="Rutherford K.M."/>
            <person name="Simmonds M."/>
            <person name="Skelton J."/>
            <person name="Stevens K."/>
            <person name="Whitehead S."/>
            <person name="Barrell B.G."/>
        </authorList>
    </citation>
    <scope>NUCLEOTIDE SEQUENCE [LARGE SCALE GENOMIC DNA]</scope>
    <source>
        <strain>CT18</strain>
    </source>
</reference>
<reference key="2">
    <citation type="journal article" date="2003" name="J. Bacteriol.">
        <title>Comparative genomics of Salmonella enterica serovar Typhi strains Ty2 and CT18.</title>
        <authorList>
            <person name="Deng W."/>
            <person name="Liou S.-R."/>
            <person name="Plunkett G. III"/>
            <person name="Mayhew G.F."/>
            <person name="Rose D.J."/>
            <person name="Burland V."/>
            <person name="Kodoyianni V."/>
            <person name="Schwartz D.C."/>
            <person name="Blattner F.R."/>
        </authorList>
    </citation>
    <scope>NUCLEOTIDE SEQUENCE [LARGE SCALE GENOMIC DNA]</scope>
    <source>
        <strain>ATCC 700931 / Ty2</strain>
    </source>
</reference>
<accession>Q8Z116</accession>
<name>AMPA_SALTI</name>
<gene>
    <name evidence="1" type="primary">pepA</name>
    <name type="ordered locus">STY4816</name>
    <name type="ordered locus">t4512</name>
</gene>
<dbReference type="EC" id="3.4.11.1" evidence="1"/>
<dbReference type="EC" id="3.4.11.10" evidence="1"/>
<dbReference type="EMBL" id="AL513382">
    <property type="protein sequence ID" value="CAD06938.1"/>
    <property type="molecule type" value="Genomic_DNA"/>
</dbReference>
<dbReference type="EMBL" id="AE014613">
    <property type="protein sequence ID" value="AAO71959.1"/>
    <property type="molecule type" value="Genomic_DNA"/>
</dbReference>
<dbReference type="RefSeq" id="NP_458895.1">
    <property type="nucleotide sequence ID" value="NC_003198.1"/>
</dbReference>
<dbReference type="RefSeq" id="WP_000397157.1">
    <property type="nucleotide sequence ID" value="NZ_WSUR01000016.1"/>
</dbReference>
<dbReference type="SMR" id="Q8Z116"/>
<dbReference type="STRING" id="220341.gene:17588638"/>
<dbReference type="MEROPS" id="M17.003"/>
<dbReference type="KEGG" id="stt:t4512"/>
<dbReference type="KEGG" id="sty:STY4816"/>
<dbReference type="PATRIC" id="fig|220341.7.peg.4925"/>
<dbReference type="eggNOG" id="COG0260">
    <property type="taxonomic scope" value="Bacteria"/>
</dbReference>
<dbReference type="HOGENOM" id="CLU_013734_2_2_6"/>
<dbReference type="OMA" id="WPMPLPE"/>
<dbReference type="OrthoDB" id="9809354at2"/>
<dbReference type="Proteomes" id="UP000000541">
    <property type="component" value="Chromosome"/>
</dbReference>
<dbReference type="Proteomes" id="UP000002670">
    <property type="component" value="Chromosome"/>
</dbReference>
<dbReference type="GO" id="GO:0005737">
    <property type="term" value="C:cytoplasm"/>
    <property type="evidence" value="ECO:0007669"/>
    <property type="project" value="UniProtKB-SubCell"/>
</dbReference>
<dbReference type="GO" id="GO:0030145">
    <property type="term" value="F:manganese ion binding"/>
    <property type="evidence" value="ECO:0007669"/>
    <property type="project" value="UniProtKB-UniRule"/>
</dbReference>
<dbReference type="GO" id="GO:0070006">
    <property type="term" value="F:metalloaminopeptidase activity"/>
    <property type="evidence" value="ECO:0007669"/>
    <property type="project" value="InterPro"/>
</dbReference>
<dbReference type="GO" id="GO:0006508">
    <property type="term" value="P:proteolysis"/>
    <property type="evidence" value="ECO:0007669"/>
    <property type="project" value="UniProtKB-KW"/>
</dbReference>
<dbReference type="CDD" id="cd00433">
    <property type="entry name" value="Peptidase_M17"/>
    <property type="match status" value="1"/>
</dbReference>
<dbReference type="FunFam" id="3.40.220.10:FF:000001">
    <property type="entry name" value="Probable cytosol aminopeptidase"/>
    <property type="match status" value="1"/>
</dbReference>
<dbReference type="FunFam" id="3.40.630.10:FF:000004">
    <property type="entry name" value="Probable cytosol aminopeptidase"/>
    <property type="match status" value="1"/>
</dbReference>
<dbReference type="Gene3D" id="3.40.220.10">
    <property type="entry name" value="Leucine Aminopeptidase, subunit E, domain 1"/>
    <property type="match status" value="1"/>
</dbReference>
<dbReference type="Gene3D" id="3.40.630.10">
    <property type="entry name" value="Zn peptidases"/>
    <property type="match status" value="1"/>
</dbReference>
<dbReference type="HAMAP" id="MF_00181">
    <property type="entry name" value="Cytosol_peptidase_M17"/>
    <property type="match status" value="1"/>
</dbReference>
<dbReference type="InterPro" id="IPR011356">
    <property type="entry name" value="Leucine_aapep/pepB"/>
</dbReference>
<dbReference type="InterPro" id="IPR043472">
    <property type="entry name" value="Macro_dom-like"/>
</dbReference>
<dbReference type="InterPro" id="IPR000819">
    <property type="entry name" value="Peptidase_M17_C"/>
</dbReference>
<dbReference type="InterPro" id="IPR023042">
    <property type="entry name" value="Peptidase_M17_leu_NH2_pept"/>
</dbReference>
<dbReference type="InterPro" id="IPR008283">
    <property type="entry name" value="Peptidase_M17_N"/>
</dbReference>
<dbReference type="NCBIfam" id="NF002072">
    <property type="entry name" value="PRK00913.1-1"/>
    <property type="match status" value="1"/>
</dbReference>
<dbReference type="NCBIfam" id="NF002074">
    <property type="entry name" value="PRK00913.1-4"/>
    <property type="match status" value="1"/>
</dbReference>
<dbReference type="PANTHER" id="PTHR11963:SF23">
    <property type="entry name" value="CYTOSOL AMINOPEPTIDASE"/>
    <property type="match status" value="1"/>
</dbReference>
<dbReference type="PANTHER" id="PTHR11963">
    <property type="entry name" value="LEUCINE AMINOPEPTIDASE-RELATED"/>
    <property type="match status" value="1"/>
</dbReference>
<dbReference type="Pfam" id="PF00883">
    <property type="entry name" value="Peptidase_M17"/>
    <property type="match status" value="1"/>
</dbReference>
<dbReference type="Pfam" id="PF02789">
    <property type="entry name" value="Peptidase_M17_N"/>
    <property type="match status" value="1"/>
</dbReference>
<dbReference type="PRINTS" id="PR00481">
    <property type="entry name" value="LAMNOPPTDASE"/>
</dbReference>
<dbReference type="SUPFAM" id="SSF52949">
    <property type="entry name" value="Macro domain-like"/>
    <property type="match status" value="1"/>
</dbReference>
<dbReference type="SUPFAM" id="SSF53187">
    <property type="entry name" value="Zn-dependent exopeptidases"/>
    <property type="match status" value="1"/>
</dbReference>
<dbReference type="PROSITE" id="PS00631">
    <property type="entry name" value="CYTOSOL_AP"/>
    <property type="match status" value="1"/>
</dbReference>
<proteinExistence type="inferred from homology"/>
<sequence>MEFSVKSGSPEKQRSACIVVGVFEPRRLSPIAEQLDKISDGYISALLRRGELEGKPGQTLLLHHVPNVLSERILLIGCGKERELDERQYKQVIQKTINTLNDTGSMEAVCFLTELHVKGRNNYWKVRQAVETAKETLYSFDQLKTNKSEPRRPLRKMVFNVPTRRELTSGERAIQHGLAIAAGIKAAKDLGNMPPNICNAAYLASQARQLADSYSKNVITRVIGEQQMRELGMNAYLAVGHGSQNESLMSVIEYKGNPSEDARPIVLVGKGLTFDSGGISIKPSEGMDEMKYDMCGAAAVYGVMRMVAELKLPINVIGVLAGCENMPGGRAYRPGDVLTTMSDQTVEVLNTDAEGRLVLCDVLTYVERFEPEAVIDVATLTGACVIALGHHITGLMSNHNPLAHELIGASEQAGDRAWRLPLGDEFQEQLESNFADMANIGGRPGGAITAGCFLSRFTRKYNWAHLDIAGTAWRSGKAKGATGRPVALLSQFLLNRAGFNGEE</sequence>
<feature type="chain" id="PRO_0000165794" description="Probable cytosol aminopeptidase">
    <location>
        <begin position="1"/>
        <end position="503"/>
    </location>
</feature>
<feature type="active site" evidence="1">
    <location>
        <position position="282"/>
    </location>
</feature>
<feature type="active site" evidence="1">
    <location>
        <position position="356"/>
    </location>
</feature>
<feature type="binding site" evidence="1">
    <location>
        <position position="270"/>
    </location>
    <ligand>
        <name>Mn(2+)</name>
        <dbReference type="ChEBI" id="CHEBI:29035"/>
        <label>2</label>
    </ligand>
</feature>
<feature type="binding site" evidence="1">
    <location>
        <position position="275"/>
    </location>
    <ligand>
        <name>Mn(2+)</name>
        <dbReference type="ChEBI" id="CHEBI:29035"/>
        <label>1</label>
    </ligand>
</feature>
<feature type="binding site" evidence="1">
    <location>
        <position position="275"/>
    </location>
    <ligand>
        <name>Mn(2+)</name>
        <dbReference type="ChEBI" id="CHEBI:29035"/>
        <label>2</label>
    </ligand>
</feature>
<feature type="binding site" evidence="1">
    <location>
        <position position="293"/>
    </location>
    <ligand>
        <name>Mn(2+)</name>
        <dbReference type="ChEBI" id="CHEBI:29035"/>
        <label>2</label>
    </ligand>
</feature>
<feature type="binding site" evidence="1">
    <location>
        <position position="352"/>
    </location>
    <ligand>
        <name>Mn(2+)</name>
        <dbReference type="ChEBI" id="CHEBI:29035"/>
        <label>1</label>
    </ligand>
</feature>
<feature type="binding site" evidence="1">
    <location>
        <position position="354"/>
    </location>
    <ligand>
        <name>Mn(2+)</name>
        <dbReference type="ChEBI" id="CHEBI:29035"/>
        <label>1</label>
    </ligand>
</feature>
<feature type="binding site" evidence="1">
    <location>
        <position position="354"/>
    </location>
    <ligand>
        <name>Mn(2+)</name>
        <dbReference type="ChEBI" id="CHEBI:29035"/>
        <label>2</label>
    </ligand>
</feature>